<sequence length="286" mass="31986">MNLKHKWDVYSRLTRLDRPIGTLLLLWPCLMALVLAAGGMPDLKVLIIFIIGVVIMRACGCIINDYADRDLDSHVERTKSRPLASGEISTKEALLLFVILGLAAFGLVLLLNGLVVKLSVVGIILTIIYPFTKRVTNMPQMFLGVVWSWSIPMAYAAQTGEVPIEAWWLFAANWFWTVAYDTMYAMVDRDDDLKIGIKSTAILFGKYDRQIIGLFQIAALFCFVAAGWSADRGLVYGLGLLTFVGFSTYQQMLIFGRERAPCFKAFLNNNWAGLVLFVSLGADYLF</sequence>
<comment type="function">
    <text evidence="1">Catalyzes the prenylation of para-hydroxybenzoate (PHB) with an all-trans polyprenyl group. Mediates the second step in the final reaction sequence of ubiquinone-8 (UQ-8) biosynthesis, which is the condensation of the polyisoprenoid side chain with PHB, generating the first membrane-bound Q intermediate 3-octaprenyl-4-hydroxybenzoate.</text>
</comment>
<comment type="catalytic activity">
    <reaction evidence="1">
        <text>all-trans-octaprenyl diphosphate + 4-hydroxybenzoate = 4-hydroxy-3-(all-trans-octaprenyl)benzoate + diphosphate</text>
        <dbReference type="Rhea" id="RHEA:27782"/>
        <dbReference type="ChEBI" id="CHEBI:1617"/>
        <dbReference type="ChEBI" id="CHEBI:17879"/>
        <dbReference type="ChEBI" id="CHEBI:33019"/>
        <dbReference type="ChEBI" id="CHEBI:57711"/>
        <dbReference type="EC" id="2.5.1.39"/>
    </reaction>
</comment>
<comment type="cofactor">
    <cofactor evidence="1">
        <name>Mg(2+)</name>
        <dbReference type="ChEBI" id="CHEBI:18420"/>
    </cofactor>
</comment>
<comment type="pathway">
    <text evidence="1">Cofactor biosynthesis; ubiquinone biosynthesis.</text>
</comment>
<comment type="subcellular location">
    <subcellularLocation>
        <location evidence="1">Cell inner membrane</location>
        <topology evidence="1">Multi-pass membrane protein</topology>
    </subcellularLocation>
</comment>
<comment type="similarity">
    <text evidence="1">Belongs to the UbiA prenyltransferase family.</text>
</comment>
<protein>
    <recommendedName>
        <fullName evidence="1">4-hydroxybenzoate octaprenyltransferase</fullName>
        <ecNumber evidence="1">2.5.1.39</ecNumber>
    </recommendedName>
    <alternativeName>
        <fullName evidence="1">4-HB polyprenyltransferase</fullName>
    </alternativeName>
</protein>
<feature type="chain" id="PRO_0000262839" description="4-hydroxybenzoate octaprenyltransferase">
    <location>
        <begin position="1"/>
        <end position="286"/>
    </location>
</feature>
<feature type="transmembrane region" description="Helical" evidence="1">
    <location>
        <begin position="20"/>
        <end position="40"/>
    </location>
</feature>
<feature type="transmembrane region" description="Helical" evidence="1">
    <location>
        <begin position="43"/>
        <end position="63"/>
    </location>
</feature>
<feature type="transmembrane region" description="Helical" evidence="1">
    <location>
        <begin position="96"/>
        <end position="116"/>
    </location>
</feature>
<feature type="transmembrane region" description="Helical" evidence="1">
    <location>
        <begin position="142"/>
        <end position="162"/>
    </location>
</feature>
<feature type="transmembrane region" description="Helical" evidence="1">
    <location>
        <begin position="167"/>
        <end position="187"/>
    </location>
</feature>
<feature type="transmembrane region" description="Helical" evidence="1">
    <location>
        <begin position="210"/>
        <end position="230"/>
    </location>
</feature>
<feature type="transmembrane region" description="Helical" evidence="1">
    <location>
        <begin position="235"/>
        <end position="255"/>
    </location>
</feature>
<feature type="transmembrane region" description="Helical" evidence="1">
    <location>
        <begin position="266"/>
        <end position="286"/>
    </location>
</feature>
<evidence type="ECO:0000255" key="1">
    <source>
        <dbReference type="HAMAP-Rule" id="MF_01635"/>
    </source>
</evidence>
<name>UBIA_SHEON</name>
<gene>
    <name evidence="1" type="primary">ubiA</name>
    <name type="ordered locus">SO_0468</name>
</gene>
<proteinExistence type="inferred from homology"/>
<dbReference type="EC" id="2.5.1.39" evidence="1"/>
<dbReference type="EMBL" id="AE014299">
    <property type="protein sequence ID" value="AAN53550.1"/>
    <property type="molecule type" value="Genomic_DNA"/>
</dbReference>
<dbReference type="RefSeq" id="NP_716105.1">
    <property type="nucleotide sequence ID" value="NC_004347.2"/>
</dbReference>
<dbReference type="RefSeq" id="WP_011070820.1">
    <property type="nucleotide sequence ID" value="NC_004347.2"/>
</dbReference>
<dbReference type="SMR" id="Q8EJJ5"/>
<dbReference type="STRING" id="211586.SO_0468"/>
<dbReference type="PaxDb" id="211586-SO_0468"/>
<dbReference type="KEGG" id="son:SO_0468"/>
<dbReference type="PATRIC" id="fig|211586.12.peg.454"/>
<dbReference type="eggNOG" id="COG0382">
    <property type="taxonomic scope" value="Bacteria"/>
</dbReference>
<dbReference type="HOGENOM" id="CLU_034879_1_0_6"/>
<dbReference type="OrthoDB" id="9782418at2"/>
<dbReference type="PhylomeDB" id="Q8EJJ5"/>
<dbReference type="BioCyc" id="SONE211586:G1GMP-445-MONOMER"/>
<dbReference type="UniPathway" id="UPA00232"/>
<dbReference type="Proteomes" id="UP000008186">
    <property type="component" value="Chromosome"/>
</dbReference>
<dbReference type="GO" id="GO:0005886">
    <property type="term" value="C:plasma membrane"/>
    <property type="evidence" value="ECO:0000318"/>
    <property type="project" value="GO_Central"/>
</dbReference>
<dbReference type="GO" id="GO:0008412">
    <property type="term" value="F:4-hydroxybenzoate polyprenyltransferase activity"/>
    <property type="evidence" value="ECO:0000318"/>
    <property type="project" value="GO_Central"/>
</dbReference>
<dbReference type="GO" id="GO:0006744">
    <property type="term" value="P:ubiquinone biosynthetic process"/>
    <property type="evidence" value="ECO:0000318"/>
    <property type="project" value="GO_Central"/>
</dbReference>
<dbReference type="CDD" id="cd13959">
    <property type="entry name" value="PT_UbiA_COQ2"/>
    <property type="match status" value="1"/>
</dbReference>
<dbReference type="FunFam" id="1.10.357.140:FF:000002">
    <property type="entry name" value="4-hydroxybenzoate octaprenyltransferase"/>
    <property type="match status" value="1"/>
</dbReference>
<dbReference type="FunFam" id="1.20.120.1780:FF:000001">
    <property type="entry name" value="4-hydroxybenzoate octaprenyltransferase"/>
    <property type="match status" value="1"/>
</dbReference>
<dbReference type="Gene3D" id="1.10.357.140">
    <property type="entry name" value="UbiA prenyltransferase"/>
    <property type="match status" value="1"/>
</dbReference>
<dbReference type="Gene3D" id="1.20.120.1780">
    <property type="entry name" value="UbiA prenyltransferase"/>
    <property type="match status" value="1"/>
</dbReference>
<dbReference type="HAMAP" id="MF_01635">
    <property type="entry name" value="UbiA"/>
    <property type="match status" value="1"/>
</dbReference>
<dbReference type="InterPro" id="IPR006370">
    <property type="entry name" value="HB_polyprenyltransferase-like"/>
</dbReference>
<dbReference type="InterPro" id="IPR039653">
    <property type="entry name" value="Prenyltransferase"/>
</dbReference>
<dbReference type="InterPro" id="IPR000537">
    <property type="entry name" value="UbiA_prenyltransferase"/>
</dbReference>
<dbReference type="InterPro" id="IPR030470">
    <property type="entry name" value="UbiA_prenylTrfase_CS"/>
</dbReference>
<dbReference type="InterPro" id="IPR044878">
    <property type="entry name" value="UbiA_sf"/>
</dbReference>
<dbReference type="NCBIfam" id="TIGR01474">
    <property type="entry name" value="ubiA_proteo"/>
    <property type="match status" value="1"/>
</dbReference>
<dbReference type="PANTHER" id="PTHR11048:SF28">
    <property type="entry name" value="4-HYDROXYBENZOATE POLYPRENYLTRANSFERASE, MITOCHONDRIAL"/>
    <property type="match status" value="1"/>
</dbReference>
<dbReference type="PANTHER" id="PTHR11048">
    <property type="entry name" value="PRENYLTRANSFERASES"/>
    <property type="match status" value="1"/>
</dbReference>
<dbReference type="Pfam" id="PF01040">
    <property type="entry name" value="UbiA"/>
    <property type="match status" value="1"/>
</dbReference>
<dbReference type="PROSITE" id="PS00943">
    <property type="entry name" value="UBIA"/>
    <property type="match status" value="1"/>
</dbReference>
<accession>Q8EJJ5</accession>
<organism>
    <name type="scientific">Shewanella oneidensis (strain ATCC 700550 / JCM 31522 / CIP 106686 / LMG 19005 / NCIMB 14063 / MR-1)</name>
    <dbReference type="NCBI Taxonomy" id="211586"/>
    <lineage>
        <taxon>Bacteria</taxon>
        <taxon>Pseudomonadati</taxon>
        <taxon>Pseudomonadota</taxon>
        <taxon>Gammaproteobacteria</taxon>
        <taxon>Alteromonadales</taxon>
        <taxon>Shewanellaceae</taxon>
        <taxon>Shewanella</taxon>
    </lineage>
</organism>
<reference key="1">
    <citation type="journal article" date="2002" name="Nat. Biotechnol.">
        <title>Genome sequence of the dissimilatory metal ion-reducing bacterium Shewanella oneidensis.</title>
        <authorList>
            <person name="Heidelberg J.F."/>
            <person name="Paulsen I.T."/>
            <person name="Nelson K.E."/>
            <person name="Gaidos E.J."/>
            <person name="Nelson W.C."/>
            <person name="Read T.D."/>
            <person name="Eisen J.A."/>
            <person name="Seshadri R."/>
            <person name="Ward N.L."/>
            <person name="Methe B.A."/>
            <person name="Clayton R.A."/>
            <person name="Meyer T."/>
            <person name="Tsapin A."/>
            <person name="Scott J."/>
            <person name="Beanan M.J."/>
            <person name="Brinkac L.M."/>
            <person name="Daugherty S.C."/>
            <person name="DeBoy R.T."/>
            <person name="Dodson R.J."/>
            <person name="Durkin A.S."/>
            <person name="Haft D.H."/>
            <person name="Kolonay J.F."/>
            <person name="Madupu R."/>
            <person name="Peterson J.D."/>
            <person name="Umayam L.A."/>
            <person name="White O."/>
            <person name="Wolf A.M."/>
            <person name="Vamathevan J.J."/>
            <person name="Weidman J.F."/>
            <person name="Impraim M."/>
            <person name="Lee K."/>
            <person name="Berry K.J."/>
            <person name="Lee C."/>
            <person name="Mueller J."/>
            <person name="Khouri H.M."/>
            <person name="Gill J."/>
            <person name="Utterback T.R."/>
            <person name="McDonald L.A."/>
            <person name="Feldblyum T.V."/>
            <person name="Smith H.O."/>
            <person name="Venter J.C."/>
            <person name="Nealson K.H."/>
            <person name="Fraser C.M."/>
        </authorList>
    </citation>
    <scope>NUCLEOTIDE SEQUENCE [LARGE SCALE GENOMIC DNA]</scope>
    <source>
        <strain>ATCC 700550 / JCM 31522 / CIP 106686 / LMG 19005 / NCIMB 14063 / MR-1</strain>
    </source>
</reference>
<keyword id="KW-0997">Cell inner membrane</keyword>
<keyword id="KW-1003">Cell membrane</keyword>
<keyword id="KW-0460">Magnesium</keyword>
<keyword id="KW-0472">Membrane</keyword>
<keyword id="KW-1185">Reference proteome</keyword>
<keyword id="KW-0808">Transferase</keyword>
<keyword id="KW-0812">Transmembrane</keyword>
<keyword id="KW-1133">Transmembrane helix</keyword>
<keyword id="KW-0831">Ubiquinone biosynthesis</keyword>